<proteinExistence type="inferred from homology"/>
<feature type="chain" id="PRO_1000203962" description="Glycerol kinase">
    <location>
        <begin position="1"/>
        <end position="501"/>
    </location>
</feature>
<feature type="binding site" evidence="1">
    <location>
        <position position="16"/>
    </location>
    <ligand>
        <name>ADP</name>
        <dbReference type="ChEBI" id="CHEBI:456216"/>
    </ligand>
</feature>
<feature type="binding site" evidence="1">
    <location>
        <position position="16"/>
    </location>
    <ligand>
        <name>ATP</name>
        <dbReference type="ChEBI" id="CHEBI:30616"/>
    </ligand>
</feature>
<feature type="binding site" evidence="1">
    <location>
        <position position="16"/>
    </location>
    <ligand>
        <name>sn-glycerol 3-phosphate</name>
        <dbReference type="ChEBI" id="CHEBI:57597"/>
    </ligand>
</feature>
<feature type="binding site" evidence="1">
    <location>
        <position position="17"/>
    </location>
    <ligand>
        <name>ATP</name>
        <dbReference type="ChEBI" id="CHEBI:30616"/>
    </ligand>
</feature>
<feature type="binding site" evidence="1">
    <location>
        <position position="18"/>
    </location>
    <ligand>
        <name>ATP</name>
        <dbReference type="ChEBI" id="CHEBI:30616"/>
    </ligand>
</feature>
<feature type="binding site" evidence="1">
    <location>
        <position position="20"/>
    </location>
    <ligand>
        <name>ADP</name>
        <dbReference type="ChEBI" id="CHEBI:456216"/>
    </ligand>
</feature>
<feature type="binding site" evidence="1">
    <location>
        <position position="84"/>
    </location>
    <ligand>
        <name>glycerol</name>
        <dbReference type="ChEBI" id="CHEBI:17754"/>
    </ligand>
</feature>
<feature type="binding site" evidence="1">
    <location>
        <position position="84"/>
    </location>
    <ligand>
        <name>sn-glycerol 3-phosphate</name>
        <dbReference type="ChEBI" id="CHEBI:57597"/>
    </ligand>
</feature>
<feature type="binding site" evidence="1">
    <location>
        <position position="85"/>
    </location>
    <ligand>
        <name>glycerol</name>
        <dbReference type="ChEBI" id="CHEBI:17754"/>
    </ligand>
</feature>
<feature type="binding site" evidence="1">
    <location>
        <position position="85"/>
    </location>
    <ligand>
        <name>sn-glycerol 3-phosphate</name>
        <dbReference type="ChEBI" id="CHEBI:57597"/>
    </ligand>
</feature>
<feature type="binding site" evidence="1">
    <location>
        <position position="135"/>
    </location>
    <ligand>
        <name>glycerol</name>
        <dbReference type="ChEBI" id="CHEBI:17754"/>
    </ligand>
</feature>
<feature type="binding site" evidence="1">
    <location>
        <position position="135"/>
    </location>
    <ligand>
        <name>sn-glycerol 3-phosphate</name>
        <dbReference type="ChEBI" id="CHEBI:57597"/>
    </ligand>
</feature>
<feature type="binding site" evidence="1">
    <location>
        <position position="242"/>
    </location>
    <ligand>
        <name>glycerol</name>
        <dbReference type="ChEBI" id="CHEBI:17754"/>
    </ligand>
</feature>
<feature type="binding site" evidence="1">
    <location>
        <position position="242"/>
    </location>
    <ligand>
        <name>sn-glycerol 3-phosphate</name>
        <dbReference type="ChEBI" id="CHEBI:57597"/>
    </ligand>
</feature>
<feature type="binding site" evidence="1">
    <location>
        <position position="243"/>
    </location>
    <ligand>
        <name>glycerol</name>
        <dbReference type="ChEBI" id="CHEBI:17754"/>
    </ligand>
</feature>
<feature type="binding site" evidence="1">
    <location>
        <position position="264"/>
    </location>
    <ligand>
        <name>ADP</name>
        <dbReference type="ChEBI" id="CHEBI:456216"/>
    </ligand>
</feature>
<feature type="binding site" evidence="1">
    <location>
        <position position="264"/>
    </location>
    <ligand>
        <name>ATP</name>
        <dbReference type="ChEBI" id="CHEBI:30616"/>
    </ligand>
</feature>
<feature type="binding site" evidence="1">
    <location>
        <position position="307"/>
    </location>
    <ligand>
        <name>ADP</name>
        <dbReference type="ChEBI" id="CHEBI:456216"/>
    </ligand>
</feature>
<feature type="binding site" evidence="1">
    <location>
        <position position="307"/>
    </location>
    <ligand>
        <name>ATP</name>
        <dbReference type="ChEBI" id="CHEBI:30616"/>
    </ligand>
</feature>
<feature type="binding site" evidence="1">
    <location>
        <position position="311"/>
    </location>
    <ligand>
        <name>ATP</name>
        <dbReference type="ChEBI" id="CHEBI:30616"/>
    </ligand>
</feature>
<feature type="binding site" evidence="1">
    <location>
        <position position="408"/>
    </location>
    <ligand>
        <name>ADP</name>
        <dbReference type="ChEBI" id="CHEBI:456216"/>
    </ligand>
</feature>
<feature type="binding site" evidence="1">
    <location>
        <position position="408"/>
    </location>
    <ligand>
        <name>ATP</name>
        <dbReference type="ChEBI" id="CHEBI:30616"/>
    </ligand>
</feature>
<protein>
    <recommendedName>
        <fullName evidence="1">Glycerol kinase</fullName>
        <ecNumber evidence="1">2.7.1.30</ecNumber>
    </recommendedName>
    <alternativeName>
        <fullName evidence="1">ATP:glycerol 3-phosphotransferase</fullName>
    </alternativeName>
    <alternativeName>
        <fullName evidence="1">Glycerokinase</fullName>
        <shortName evidence="1">GK</shortName>
    </alternativeName>
</protein>
<name>GLPK_SACI2</name>
<accession>C3MP45</accession>
<keyword id="KW-0067">ATP-binding</keyword>
<keyword id="KW-0319">Glycerol metabolism</keyword>
<keyword id="KW-0418">Kinase</keyword>
<keyword id="KW-0547">Nucleotide-binding</keyword>
<keyword id="KW-0808">Transferase</keyword>
<sequence>MNTMSHKFVLALDEGTTSARAILFDSDLNIVNIGQYEFPQHYPQPGYVEHDPEEIWEAQMLAVKKAISKIDAKQIVAIGITNQRETTVLWDAKSGKPVYNAIVWQDRRTSPITDWLKANYFKMIKDKTGLVPDPYFSASKIKWILDNVPNVREKAERGEIKFGTLDTYLIWRLTNGKAHVTDYSNASRTMLFNINKLECDREILELLKIPESILPEVKPSSEIYGYSEALGNLIPISGDAGDQQAALFGQVAFNVGEIKATYGTGSFILMNIGNNPIRSENLLTTIAWGLEKNKATYALEGSIFITGAAVQWFRDGLRAIDVSDEIEPLASNVEDNGGVYFVPAFVGLGAPYWDPYARGLIIGITRGTTKAHIARAILESMAYQTRDVIEVMQKESGISINSLKVDGGAAKDNLLMQFQADILGIKVIRPKVMETTSMGVAMLAGLGVGLWNSLEELRSIWKVDKEFIPSMSEEKRRALYSGWKEAVKRAMGWAKVVGGQV</sequence>
<gene>
    <name evidence="1" type="primary">glpK</name>
    <name type="ordered locus">LS215_1141</name>
</gene>
<dbReference type="EC" id="2.7.1.30" evidence="1"/>
<dbReference type="EMBL" id="CP001399">
    <property type="protein sequence ID" value="ACP35158.1"/>
    <property type="molecule type" value="Genomic_DNA"/>
</dbReference>
<dbReference type="RefSeq" id="WP_012713516.1">
    <property type="nucleotide sequence ID" value="NC_012589.1"/>
</dbReference>
<dbReference type="SMR" id="C3MP45"/>
<dbReference type="GeneID" id="7806173"/>
<dbReference type="KEGG" id="sis:LS215_1141"/>
<dbReference type="HOGENOM" id="CLU_009281_2_3_2"/>
<dbReference type="UniPathway" id="UPA00618">
    <property type="reaction ID" value="UER00672"/>
</dbReference>
<dbReference type="Proteomes" id="UP000001747">
    <property type="component" value="Chromosome"/>
</dbReference>
<dbReference type="GO" id="GO:0005829">
    <property type="term" value="C:cytosol"/>
    <property type="evidence" value="ECO:0007669"/>
    <property type="project" value="TreeGrafter"/>
</dbReference>
<dbReference type="GO" id="GO:0005524">
    <property type="term" value="F:ATP binding"/>
    <property type="evidence" value="ECO:0007669"/>
    <property type="project" value="UniProtKB-UniRule"/>
</dbReference>
<dbReference type="GO" id="GO:0004370">
    <property type="term" value="F:glycerol kinase activity"/>
    <property type="evidence" value="ECO:0000250"/>
    <property type="project" value="UniProtKB"/>
</dbReference>
<dbReference type="GO" id="GO:0019563">
    <property type="term" value="P:glycerol catabolic process"/>
    <property type="evidence" value="ECO:0007669"/>
    <property type="project" value="UniProtKB-UniRule"/>
</dbReference>
<dbReference type="GO" id="GO:0006071">
    <property type="term" value="P:glycerol metabolic process"/>
    <property type="evidence" value="ECO:0000250"/>
    <property type="project" value="UniProtKB"/>
</dbReference>
<dbReference type="GO" id="GO:0006072">
    <property type="term" value="P:glycerol-3-phosphate metabolic process"/>
    <property type="evidence" value="ECO:0007669"/>
    <property type="project" value="InterPro"/>
</dbReference>
<dbReference type="CDD" id="cd07786">
    <property type="entry name" value="FGGY_EcGK_like"/>
    <property type="match status" value="1"/>
</dbReference>
<dbReference type="FunFam" id="3.30.420.40:FF:000007">
    <property type="entry name" value="Glycerol kinase"/>
    <property type="match status" value="1"/>
</dbReference>
<dbReference type="FunFam" id="3.30.420.40:FF:000008">
    <property type="entry name" value="Glycerol kinase"/>
    <property type="match status" value="1"/>
</dbReference>
<dbReference type="Gene3D" id="3.30.420.40">
    <property type="match status" value="2"/>
</dbReference>
<dbReference type="HAMAP" id="MF_00186">
    <property type="entry name" value="Glycerol_kin"/>
    <property type="match status" value="1"/>
</dbReference>
<dbReference type="InterPro" id="IPR043129">
    <property type="entry name" value="ATPase_NBD"/>
</dbReference>
<dbReference type="InterPro" id="IPR000577">
    <property type="entry name" value="Carb_kinase_FGGY"/>
</dbReference>
<dbReference type="InterPro" id="IPR018483">
    <property type="entry name" value="Carb_kinase_FGGY_CS"/>
</dbReference>
<dbReference type="InterPro" id="IPR018485">
    <property type="entry name" value="FGGY_C"/>
</dbReference>
<dbReference type="InterPro" id="IPR018484">
    <property type="entry name" value="FGGY_N"/>
</dbReference>
<dbReference type="InterPro" id="IPR005999">
    <property type="entry name" value="Glycerol_kin"/>
</dbReference>
<dbReference type="NCBIfam" id="TIGR01311">
    <property type="entry name" value="glycerol_kin"/>
    <property type="match status" value="1"/>
</dbReference>
<dbReference type="NCBIfam" id="NF000756">
    <property type="entry name" value="PRK00047.1"/>
    <property type="match status" value="1"/>
</dbReference>
<dbReference type="PANTHER" id="PTHR10196:SF69">
    <property type="entry name" value="GLYCEROL KINASE"/>
    <property type="match status" value="1"/>
</dbReference>
<dbReference type="PANTHER" id="PTHR10196">
    <property type="entry name" value="SUGAR KINASE"/>
    <property type="match status" value="1"/>
</dbReference>
<dbReference type="Pfam" id="PF02782">
    <property type="entry name" value="FGGY_C"/>
    <property type="match status" value="1"/>
</dbReference>
<dbReference type="Pfam" id="PF00370">
    <property type="entry name" value="FGGY_N"/>
    <property type="match status" value="1"/>
</dbReference>
<dbReference type="PIRSF" id="PIRSF000538">
    <property type="entry name" value="GlpK"/>
    <property type="match status" value="1"/>
</dbReference>
<dbReference type="SUPFAM" id="SSF53067">
    <property type="entry name" value="Actin-like ATPase domain"/>
    <property type="match status" value="2"/>
</dbReference>
<dbReference type="PROSITE" id="PS00933">
    <property type="entry name" value="FGGY_KINASES_1"/>
    <property type="match status" value="1"/>
</dbReference>
<dbReference type="PROSITE" id="PS00445">
    <property type="entry name" value="FGGY_KINASES_2"/>
    <property type="match status" value="1"/>
</dbReference>
<comment type="function">
    <text evidence="1">Key enzyme in the regulation of glycerol uptake and metabolism. Catalyzes the phosphorylation of glycerol to yield sn-glycerol 3-phosphate.</text>
</comment>
<comment type="catalytic activity">
    <reaction evidence="1">
        <text>glycerol + ATP = sn-glycerol 3-phosphate + ADP + H(+)</text>
        <dbReference type="Rhea" id="RHEA:21644"/>
        <dbReference type="ChEBI" id="CHEBI:15378"/>
        <dbReference type="ChEBI" id="CHEBI:17754"/>
        <dbReference type="ChEBI" id="CHEBI:30616"/>
        <dbReference type="ChEBI" id="CHEBI:57597"/>
        <dbReference type="ChEBI" id="CHEBI:456216"/>
        <dbReference type="EC" id="2.7.1.30"/>
    </reaction>
</comment>
<comment type="pathway">
    <text evidence="1">Polyol metabolism; glycerol degradation via glycerol kinase pathway; sn-glycerol 3-phosphate from glycerol: step 1/1.</text>
</comment>
<comment type="similarity">
    <text evidence="1">Belongs to the FGGY kinase family.</text>
</comment>
<reference key="1">
    <citation type="journal article" date="2009" name="Proc. Natl. Acad. Sci. U.S.A.">
        <title>Biogeography of the Sulfolobus islandicus pan-genome.</title>
        <authorList>
            <person name="Reno M.L."/>
            <person name="Held N.L."/>
            <person name="Fields C.J."/>
            <person name="Burke P.V."/>
            <person name="Whitaker R.J."/>
        </authorList>
    </citation>
    <scope>NUCLEOTIDE SEQUENCE [LARGE SCALE GENOMIC DNA]</scope>
    <source>
        <strain>L.S.2.15 / Lassen #1</strain>
    </source>
</reference>
<evidence type="ECO:0000255" key="1">
    <source>
        <dbReference type="HAMAP-Rule" id="MF_00186"/>
    </source>
</evidence>
<organism>
    <name type="scientific">Saccharolobus islandicus (strain L.S.2.15 / Lassen #1)</name>
    <name type="common">Sulfolobus islandicus</name>
    <dbReference type="NCBI Taxonomy" id="429572"/>
    <lineage>
        <taxon>Archaea</taxon>
        <taxon>Thermoproteota</taxon>
        <taxon>Thermoprotei</taxon>
        <taxon>Sulfolobales</taxon>
        <taxon>Sulfolobaceae</taxon>
        <taxon>Saccharolobus</taxon>
    </lineage>
</organism>